<organism>
    <name type="scientific">Karelsulcia muelleri (strain GWSS)</name>
    <name type="common">Sulcia muelleri</name>
    <dbReference type="NCBI Taxonomy" id="444179"/>
    <lineage>
        <taxon>Bacteria</taxon>
        <taxon>Pseudomonadati</taxon>
        <taxon>Bacteroidota</taxon>
        <taxon>Flavobacteriia</taxon>
        <taxon>Flavobacteriales</taxon>
        <taxon>Candidatus Karelsulcia</taxon>
    </lineage>
</organism>
<gene>
    <name evidence="2" type="primary">tuf</name>
    <name type="ordered locus">SMGWSS_063</name>
</gene>
<proteinExistence type="inferred from homology"/>
<evidence type="ECO:0000250" key="1"/>
<evidence type="ECO:0000255" key="2">
    <source>
        <dbReference type="HAMAP-Rule" id="MF_00118"/>
    </source>
</evidence>
<sequence>MAKEIFRRDKPHLNIGTIGHVDHGKTTLTASITKVLAKKGLAVAKEFSSIDNAPEEKERGITINTSHVEYQTEIRHYAHVDCPGHADYVKNMVTGAAQMDGAILVVAATDGPMPQTREHILLARQVGVPNLVVFMNKVDQVDDKEILELVEIEIRELLSKYEYDGENIPIIQGSALGALNGEKKWEKQIETLMKTVDNYIKEPIRNIDKPFLMPIEDVFTITGRGTVATGRIETGTINTGDSIDIIGMGIDKLNSIVTGVEMFRKILDKGQAGDNVGLLLRGIEKKDIRRGMVISKPGYITPHKKFNAQIYILKKEEGGRHTPFHNKYKPQFYLRTTDVTGTIYLLNNLEMVMPGDNISVEVELLQPVAISEGLRFAIREGGRTVGAGQVIKIIE</sequence>
<feature type="chain" id="PRO_1000076116" description="Elongation factor Tu">
    <location>
        <begin position="1"/>
        <end position="395"/>
    </location>
</feature>
<feature type="domain" description="tr-type G">
    <location>
        <begin position="10"/>
        <end position="204"/>
    </location>
</feature>
<feature type="region of interest" description="G1" evidence="1">
    <location>
        <begin position="19"/>
        <end position="26"/>
    </location>
</feature>
<feature type="region of interest" description="G2" evidence="1">
    <location>
        <begin position="60"/>
        <end position="64"/>
    </location>
</feature>
<feature type="region of interest" description="G3" evidence="1">
    <location>
        <begin position="81"/>
        <end position="84"/>
    </location>
</feature>
<feature type="region of interest" description="G4" evidence="1">
    <location>
        <begin position="136"/>
        <end position="139"/>
    </location>
</feature>
<feature type="region of interest" description="G5" evidence="1">
    <location>
        <begin position="174"/>
        <end position="176"/>
    </location>
</feature>
<feature type="binding site" evidence="2">
    <location>
        <begin position="19"/>
        <end position="26"/>
    </location>
    <ligand>
        <name>GTP</name>
        <dbReference type="ChEBI" id="CHEBI:37565"/>
    </ligand>
</feature>
<feature type="binding site" evidence="2">
    <location>
        <position position="26"/>
    </location>
    <ligand>
        <name>Mg(2+)</name>
        <dbReference type="ChEBI" id="CHEBI:18420"/>
    </ligand>
</feature>
<feature type="binding site" evidence="2">
    <location>
        <begin position="81"/>
        <end position="85"/>
    </location>
    <ligand>
        <name>GTP</name>
        <dbReference type="ChEBI" id="CHEBI:37565"/>
    </ligand>
</feature>
<feature type="binding site" evidence="2">
    <location>
        <begin position="136"/>
        <end position="139"/>
    </location>
    <ligand>
        <name>GTP</name>
        <dbReference type="ChEBI" id="CHEBI:37565"/>
    </ligand>
</feature>
<reference key="1">
    <citation type="journal article" date="2007" name="Proc. Natl. Acad. Sci. U.S.A.">
        <title>Parallel genomic evolution and metabolic interdependence in an ancient symbiosis.</title>
        <authorList>
            <person name="McCutcheon J.P."/>
            <person name="Moran N.A."/>
        </authorList>
    </citation>
    <scope>NUCLEOTIDE SEQUENCE [LARGE SCALE GENOMIC DNA]</scope>
    <source>
        <strain>GWSS</strain>
    </source>
</reference>
<name>EFTU_KARMG</name>
<keyword id="KW-0963">Cytoplasm</keyword>
<keyword id="KW-0251">Elongation factor</keyword>
<keyword id="KW-0342">GTP-binding</keyword>
<keyword id="KW-0378">Hydrolase</keyword>
<keyword id="KW-0460">Magnesium</keyword>
<keyword id="KW-0479">Metal-binding</keyword>
<keyword id="KW-0547">Nucleotide-binding</keyword>
<keyword id="KW-0648">Protein biosynthesis</keyword>
<accession>A8Z5T8</accession>
<protein>
    <recommendedName>
        <fullName evidence="2">Elongation factor Tu</fullName>
        <shortName evidence="2">EF-Tu</shortName>
        <ecNumber evidence="2">3.6.5.3</ecNumber>
    </recommendedName>
</protein>
<dbReference type="EC" id="3.6.5.3" evidence="2"/>
<dbReference type="EMBL" id="CP000770">
    <property type="protein sequence ID" value="ABS30489.1"/>
    <property type="molecule type" value="Genomic_DNA"/>
</dbReference>
<dbReference type="SMR" id="A8Z5T8"/>
<dbReference type="STRING" id="444179.SMGWSS_063"/>
<dbReference type="KEGG" id="smg:SMGWSS_063"/>
<dbReference type="HOGENOM" id="CLU_007265_0_0_10"/>
<dbReference type="Proteomes" id="UP000000781">
    <property type="component" value="Chromosome"/>
</dbReference>
<dbReference type="GO" id="GO:0005829">
    <property type="term" value="C:cytosol"/>
    <property type="evidence" value="ECO:0007669"/>
    <property type="project" value="TreeGrafter"/>
</dbReference>
<dbReference type="GO" id="GO:0005525">
    <property type="term" value="F:GTP binding"/>
    <property type="evidence" value="ECO:0007669"/>
    <property type="project" value="UniProtKB-UniRule"/>
</dbReference>
<dbReference type="GO" id="GO:0003924">
    <property type="term" value="F:GTPase activity"/>
    <property type="evidence" value="ECO:0007669"/>
    <property type="project" value="InterPro"/>
</dbReference>
<dbReference type="GO" id="GO:0003746">
    <property type="term" value="F:translation elongation factor activity"/>
    <property type="evidence" value="ECO:0007669"/>
    <property type="project" value="UniProtKB-UniRule"/>
</dbReference>
<dbReference type="CDD" id="cd01884">
    <property type="entry name" value="EF_Tu"/>
    <property type="match status" value="1"/>
</dbReference>
<dbReference type="CDD" id="cd03697">
    <property type="entry name" value="EFTU_II"/>
    <property type="match status" value="1"/>
</dbReference>
<dbReference type="CDD" id="cd03707">
    <property type="entry name" value="EFTU_III"/>
    <property type="match status" value="1"/>
</dbReference>
<dbReference type="FunFam" id="2.40.30.10:FF:000001">
    <property type="entry name" value="Elongation factor Tu"/>
    <property type="match status" value="1"/>
</dbReference>
<dbReference type="FunFam" id="3.40.50.300:FF:000003">
    <property type="entry name" value="Elongation factor Tu"/>
    <property type="match status" value="1"/>
</dbReference>
<dbReference type="Gene3D" id="3.40.50.300">
    <property type="entry name" value="P-loop containing nucleotide triphosphate hydrolases"/>
    <property type="match status" value="1"/>
</dbReference>
<dbReference type="Gene3D" id="2.40.30.10">
    <property type="entry name" value="Translation factors"/>
    <property type="match status" value="2"/>
</dbReference>
<dbReference type="HAMAP" id="MF_00118_B">
    <property type="entry name" value="EF_Tu_B"/>
    <property type="match status" value="1"/>
</dbReference>
<dbReference type="InterPro" id="IPR041709">
    <property type="entry name" value="EF-Tu_GTP-bd"/>
</dbReference>
<dbReference type="InterPro" id="IPR050055">
    <property type="entry name" value="EF-Tu_GTPase"/>
</dbReference>
<dbReference type="InterPro" id="IPR004161">
    <property type="entry name" value="EFTu-like_2"/>
</dbReference>
<dbReference type="InterPro" id="IPR033720">
    <property type="entry name" value="EFTU_2"/>
</dbReference>
<dbReference type="InterPro" id="IPR031157">
    <property type="entry name" value="G_TR_CS"/>
</dbReference>
<dbReference type="InterPro" id="IPR027417">
    <property type="entry name" value="P-loop_NTPase"/>
</dbReference>
<dbReference type="InterPro" id="IPR005225">
    <property type="entry name" value="Small_GTP-bd"/>
</dbReference>
<dbReference type="InterPro" id="IPR000795">
    <property type="entry name" value="T_Tr_GTP-bd_dom"/>
</dbReference>
<dbReference type="InterPro" id="IPR009000">
    <property type="entry name" value="Transl_B-barrel_sf"/>
</dbReference>
<dbReference type="InterPro" id="IPR009001">
    <property type="entry name" value="Transl_elong_EF1A/Init_IF2_C"/>
</dbReference>
<dbReference type="InterPro" id="IPR004541">
    <property type="entry name" value="Transl_elong_EFTu/EF1A_bac/org"/>
</dbReference>
<dbReference type="InterPro" id="IPR004160">
    <property type="entry name" value="Transl_elong_EFTu/EF1A_C"/>
</dbReference>
<dbReference type="NCBIfam" id="TIGR00485">
    <property type="entry name" value="EF-Tu"/>
    <property type="match status" value="1"/>
</dbReference>
<dbReference type="NCBIfam" id="NF000766">
    <property type="entry name" value="PRK00049.1"/>
    <property type="match status" value="1"/>
</dbReference>
<dbReference type="NCBIfam" id="NF009372">
    <property type="entry name" value="PRK12735.1"/>
    <property type="match status" value="1"/>
</dbReference>
<dbReference type="NCBIfam" id="NF009373">
    <property type="entry name" value="PRK12736.1"/>
    <property type="match status" value="1"/>
</dbReference>
<dbReference type="NCBIfam" id="TIGR00231">
    <property type="entry name" value="small_GTP"/>
    <property type="match status" value="1"/>
</dbReference>
<dbReference type="PANTHER" id="PTHR43721:SF22">
    <property type="entry name" value="ELONGATION FACTOR TU, MITOCHONDRIAL"/>
    <property type="match status" value="1"/>
</dbReference>
<dbReference type="PANTHER" id="PTHR43721">
    <property type="entry name" value="ELONGATION FACTOR TU-RELATED"/>
    <property type="match status" value="1"/>
</dbReference>
<dbReference type="Pfam" id="PF00009">
    <property type="entry name" value="GTP_EFTU"/>
    <property type="match status" value="1"/>
</dbReference>
<dbReference type="Pfam" id="PF03144">
    <property type="entry name" value="GTP_EFTU_D2"/>
    <property type="match status" value="1"/>
</dbReference>
<dbReference type="Pfam" id="PF03143">
    <property type="entry name" value="GTP_EFTU_D3"/>
    <property type="match status" value="1"/>
</dbReference>
<dbReference type="PRINTS" id="PR00315">
    <property type="entry name" value="ELONGATNFCT"/>
</dbReference>
<dbReference type="SUPFAM" id="SSF50465">
    <property type="entry name" value="EF-Tu/eEF-1alpha/eIF2-gamma C-terminal domain"/>
    <property type="match status" value="1"/>
</dbReference>
<dbReference type="SUPFAM" id="SSF52540">
    <property type="entry name" value="P-loop containing nucleoside triphosphate hydrolases"/>
    <property type="match status" value="1"/>
</dbReference>
<dbReference type="SUPFAM" id="SSF50447">
    <property type="entry name" value="Translation proteins"/>
    <property type="match status" value="1"/>
</dbReference>
<dbReference type="PROSITE" id="PS00301">
    <property type="entry name" value="G_TR_1"/>
    <property type="match status" value="1"/>
</dbReference>
<dbReference type="PROSITE" id="PS51722">
    <property type="entry name" value="G_TR_2"/>
    <property type="match status" value="1"/>
</dbReference>
<comment type="function">
    <text evidence="2">GTP hydrolase that promotes the GTP-dependent binding of aminoacyl-tRNA to the A-site of ribosomes during protein biosynthesis.</text>
</comment>
<comment type="catalytic activity">
    <reaction evidence="2">
        <text>GTP + H2O = GDP + phosphate + H(+)</text>
        <dbReference type="Rhea" id="RHEA:19669"/>
        <dbReference type="ChEBI" id="CHEBI:15377"/>
        <dbReference type="ChEBI" id="CHEBI:15378"/>
        <dbReference type="ChEBI" id="CHEBI:37565"/>
        <dbReference type="ChEBI" id="CHEBI:43474"/>
        <dbReference type="ChEBI" id="CHEBI:58189"/>
        <dbReference type="EC" id="3.6.5.3"/>
    </reaction>
    <physiologicalReaction direction="left-to-right" evidence="2">
        <dbReference type="Rhea" id="RHEA:19670"/>
    </physiologicalReaction>
</comment>
<comment type="subunit">
    <text evidence="2">Monomer.</text>
</comment>
<comment type="subcellular location">
    <subcellularLocation>
        <location evidence="2">Cytoplasm</location>
    </subcellularLocation>
</comment>
<comment type="similarity">
    <text evidence="2">Belongs to the TRAFAC class translation factor GTPase superfamily. Classic translation factor GTPase family. EF-Tu/EF-1A subfamily.</text>
</comment>